<sequence>MQTEHVILLNAQGVPTGTLEKYAAHTADTLLHLAFSSWLFNAKGQLLVTRRALSKKAWPGVWTNSVCGHPQLGESNEEAVIRRCRYELGVEITPPESIYPDFRYRATDPNGIVENEVCPVFAARTTSALQINDDEVMDYQWCDLADVLRGIDATPWAFSPWMVMQATNREARKRLSAFTQLK</sequence>
<name>IDI_ECOL6</name>
<reference key="1">
    <citation type="journal article" date="2002" name="Proc. Natl. Acad. Sci. U.S.A.">
        <title>Extensive mosaic structure revealed by the complete genome sequence of uropathogenic Escherichia coli.</title>
        <authorList>
            <person name="Welch R.A."/>
            <person name="Burland V."/>
            <person name="Plunkett G. III"/>
            <person name="Redford P."/>
            <person name="Roesch P."/>
            <person name="Rasko D."/>
            <person name="Buckles E.L."/>
            <person name="Liou S.-R."/>
            <person name="Boutin A."/>
            <person name="Hackett J."/>
            <person name="Stroud D."/>
            <person name="Mayhew G.F."/>
            <person name="Rose D.J."/>
            <person name="Zhou S."/>
            <person name="Schwartz D.C."/>
            <person name="Perna N.T."/>
            <person name="Mobley H.L.T."/>
            <person name="Donnenberg M.S."/>
            <person name="Blattner F.R."/>
        </authorList>
    </citation>
    <scope>NUCLEOTIDE SEQUENCE [LARGE SCALE GENOMIC DNA]</scope>
    <source>
        <strain>CFT073 / ATCC 700928 / UPEC</strain>
    </source>
</reference>
<gene>
    <name evidence="1" type="primary">idi</name>
    <name type="ordered locus">c3467</name>
</gene>
<protein>
    <recommendedName>
        <fullName evidence="1">Isopentenyl-diphosphate Delta-isomerase</fullName>
        <shortName evidence="1">IPP isomerase</shortName>
        <ecNumber evidence="1">5.3.3.2</ecNumber>
    </recommendedName>
    <alternativeName>
        <fullName evidence="1">IPP:DMAPP isomerase</fullName>
    </alternativeName>
    <alternativeName>
        <fullName evidence="1">Isopentenyl pyrophosphate isomerase</fullName>
    </alternativeName>
</protein>
<dbReference type="EC" id="5.3.3.2" evidence="1"/>
<dbReference type="EMBL" id="AE014075">
    <property type="protein sequence ID" value="AAN81915.1"/>
    <property type="molecule type" value="Genomic_DNA"/>
</dbReference>
<dbReference type="RefSeq" id="WP_001192799.1">
    <property type="nucleotide sequence ID" value="NZ_CP051263.1"/>
</dbReference>
<dbReference type="SMR" id="Q8FE75"/>
<dbReference type="STRING" id="199310.c3467"/>
<dbReference type="KEGG" id="ecc:c3467"/>
<dbReference type="eggNOG" id="COG1443">
    <property type="taxonomic scope" value="Bacteria"/>
</dbReference>
<dbReference type="HOGENOM" id="CLU_060552_2_0_6"/>
<dbReference type="BioCyc" id="ECOL199310:C3467-MONOMER"/>
<dbReference type="UniPathway" id="UPA00059">
    <property type="reaction ID" value="UER00104"/>
</dbReference>
<dbReference type="Proteomes" id="UP000001410">
    <property type="component" value="Chromosome"/>
</dbReference>
<dbReference type="GO" id="GO:0005737">
    <property type="term" value="C:cytoplasm"/>
    <property type="evidence" value="ECO:0007669"/>
    <property type="project" value="UniProtKB-SubCell"/>
</dbReference>
<dbReference type="GO" id="GO:0004452">
    <property type="term" value="F:isopentenyl-diphosphate delta-isomerase activity"/>
    <property type="evidence" value="ECO:0007669"/>
    <property type="project" value="UniProtKB-UniRule"/>
</dbReference>
<dbReference type="GO" id="GO:0046872">
    <property type="term" value="F:metal ion binding"/>
    <property type="evidence" value="ECO:0007669"/>
    <property type="project" value="UniProtKB-KW"/>
</dbReference>
<dbReference type="GO" id="GO:0050992">
    <property type="term" value="P:dimethylallyl diphosphate biosynthetic process"/>
    <property type="evidence" value="ECO:0007669"/>
    <property type="project" value="UniProtKB-UniRule"/>
</dbReference>
<dbReference type="GO" id="GO:0008299">
    <property type="term" value="P:isoprenoid biosynthetic process"/>
    <property type="evidence" value="ECO:0007669"/>
    <property type="project" value="UniProtKB-KW"/>
</dbReference>
<dbReference type="CDD" id="cd02885">
    <property type="entry name" value="NUDIX_IPP_Isomerase"/>
    <property type="match status" value="1"/>
</dbReference>
<dbReference type="FunFam" id="3.90.79.10:FF:000009">
    <property type="entry name" value="Isopentenyl-diphosphate Delta-isomerase"/>
    <property type="match status" value="1"/>
</dbReference>
<dbReference type="Gene3D" id="3.90.79.10">
    <property type="entry name" value="Nucleoside Triphosphate Pyrophosphohydrolase"/>
    <property type="match status" value="1"/>
</dbReference>
<dbReference type="HAMAP" id="MF_00202">
    <property type="entry name" value="Idi"/>
    <property type="match status" value="1"/>
</dbReference>
<dbReference type="InterPro" id="IPR056375">
    <property type="entry name" value="Idi_bact"/>
</dbReference>
<dbReference type="InterPro" id="IPR011876">
    <property type="entry name" value="IsopentenylPP_isomerase_typ1"/>
</dbReference>
<dbReference type="InterPro" id="IPR015797">
    <property type="entry name" value="NUDIX_hydrolase-like_dom_sf"/>
</dbReference>
<dbReference type="InterPro" id="IPR000086">
    <property type="entry name" value="NUDIX_hydrolase_dom"/>
</dbReference>
<dbReference type="NCBIfam" id="TIGR02150">
    <property type="entry name" value="IPP_isom_1"/>
    <property type="match status" value="1"/>
</dbReference>
<dbReference type="NCBIfam" id="NF002995">
    <property type="entry name" value="PRK03759.1"/>
    <property type="match status" value="1"/>
</dbReference>
<dbReference type="PANTHER" id="PTHR10885">
    <property type="entry name" value="ISOPENTENYL-DIPHOSPHATE DELTA-ISOMERASE"/>
    <property type="match status" value="1"/>
</dbReference>
<dbReference type="PANTHER" id="PTHR10885:SF0">
    <property type="entry name" value="ISOPENTENYL-DIPHOSPHATE DELTA-ISOMERASE"/>
    <property type="match status" value="1"/>
</dbReference>
<dbReference type="Pfam" id="PF00293">
    <property type="entry name" value="NUDIX"/>
    <property type="match status" value="1"/>
</dbReference>
<dbReference type="PIRSF" id="PIRSF018427">
    <property type="entry name" value="Isopntndiph_ism"/>
    <property type="match status" value="1"/>
</dbReference>
<dbReference type="SUPFAM" id="SSF55811">
    <property type="entry name" value="Nudix"/>
    <property type="match status" value="1"/>
</dbReference>
<dbReference type="PROSITE" id="PS51462">
    <property type="entry name" value="NUDIX"/>
    <property type="match status" value="1"/>
</dbReference>
<feature type="chain" id="PRO_0000205251" description="Isopentenyl-diphosphate Delta-isomerase">
    <location>
        <begin position="1"/>
        <end position="182"/>
    </location>
</feature>
<feature type="domain" description="Nudix hydrolase">
    <location>
        <begin position="30"/>
        <end position="164"/>
    </location>
</feature>
<feature type="active site" evidence="1">
    <location>
        <position position="67"/>
    </location>
</feature>
<feature type="active site" evidence="1">
    <location>
        <position position="116"/>
    </location>
</feature>
<feature type="binding site" evidence="1">
    <location>
        <position position="25"/>
    </location>
    <ligand>
        <name>Mn(2+)</name>
        <dbReference type="ChEBI" id="CHEBI:29035"/>
    </ligand>
</feature>
<feature type="binding site" evidence="1">
    <location>
        <position position="32"/>
    </location>
    <ligand>
        <name>Mn(2+)</name>
        <dbReference type="ChEBI" id="CHEBI:29035"/>
    </ligand>
</feature>
<feature type="binding site" evidence="1">
    <location>
        <position position="67"/>
    </location>
    <ligand>
        <name>Mg(2+)</name>
        <dbReference type="ChEBI" id="CHEBI:18420"/>
    </ligand>
</feature>
<feature type="binding site" evidence="1">
    <location>
        <position position="69"/>
    </location>
    <ligand>
        <name>Mn(2+)</name>
        <dbReference type="ChEBI" id="CHEBI:29035"/>
    </ligand>
</feature>
<feature type="binding site" evidence="1">
    <location>
        <position position="87"/>
    </location>
    <ligand>
        <name>Mg(2+)</name>
        <dbReference type="ChEBI" id="CHEBI:18420"/>
    </ligand>
</feature>
<feature type="binding site" evidence="1">
    <location>
        <position position="114"/>
    </location>
    <ligand>
        <name>Mn(2+)</name>
        <dbReference type="ChEBI" id="CHEBI:29035"/>
    </ligand>
</feature>
<feature type="binding site" evidence="1">
    <location>
        <position position="116"/>
    </location>
    <ligand>
        <name>Mn(2+)</name>
        <dbReference type="ChEBI" id="CHEBI:29035"/>
    </ligand>
</feature>
<evidence type="ECO:0000255" key="1">
    <source>
        <dbReference type="HAMAP-Rule" id="MF_00202"/>
    </source>
</evidence>
<comment type="function">
    <text evidence="1">Catalyzes the 1,3-allylic rearrangement of the homoallylic substrate isopentenyl (IPP) to its highly electrophilic allylic isomer, dimethylallyl diphosphate (DMAPP).</text>
</comment>
<comment type="catalytic activity">
    <reaction evidence="1">
        <text>isopentenyl diphosphate = dimethylallyl diphosphate</text>
        <dbReference type="Rhea" id="RHEA:23284"/>
        <dbReference type="ChEBI" id="CHEBI:57623"/>
        <dbReference type="ChEBI" id="CHEBI:128769"/>
        <dbReference type="EC" id="5.3.3.2"/>
    </reaction>
</comment>
<comment type="cofactor">
    <cofactor evidence="1">
        <name>Mg(2+)</name>
        <dbReference type="ChEBI" id="CHEBI:18420"/>
    </cofactor>
    <text evidence="1">Binds 1 Mg(2+) ion per subunit. The magnesium ion binds only when substrate is bound.</text>
</comment>
<comment type="cofactor">
    <cofactor evidence="1">
        <name>Mn(2+)</name>
        <dbReference type="ChEBI" id="CHEBI:29035"/>
    </cofactor>
    <text evidence="1">Binds 1 Mn(2+) ion per subunit.</text>
</comment>
<comment type="pathway">
    <text evidence="1">Isoprenoid biosynthesis; dimethylallyl diphosphate biosynthesis; dimethylallyl diphosphate from isopentenyl diphosphate: step 1/1.</text>
</comment>
<comment type="subunit">
    <text evidence="1">Homodimer.</text>
</comment>
<comment type="subcellular location">
    <subcellularLocation>
        <location evidence="1">Cytoplasm</location>
    </subcellularLocation>
</comment>
<comment type="similarity">
    <text evidence="1">Belongs to the IPP isomerase type 1 family.</text>
</comment>
<organism>
    <name type="scientific">Escherichia coli O6:H1 (strain CFT073 / ATCC 700928 / UPEC)</name>
    <dbReference type="NCBI Taxonomy" id="199310"/>
    <lineage>
        <taxon>Bacteria</taxon>
        <taxon>Pseudomonadati</taxon>
        <taxon>Pseudomonadota</taxon>
        <taxon>Gammaproteobacteria</taxon>
        <taxon>Enterobacterales</taxon>
        <taxon>Enterobacteriaceae</taxon>
        <taxon>Escherichia</taxon>
    </lineage>
</organism>
<proteinExistence type="inferred from homology"/>
<keyword id="KW-0963">Cytoplasm</keyword>
<keyword id="KW-0413">Isomerase</keyword>
<keyword id="KW-0414">Isoprene biosynthesis</keyword>
<keyword id="KW-0460">Magnesium</keyword>
<keyword id="KW-0464">Manganese</keyword>
<keyword id="KW-0479">Metal-binding</keyword>
<keyword id="KW-1185">Reference proteome</keyword>
<accession>Q8FE75</accession>